<dbReference type="EC" id="3.5.1.18" evidence="1"/>
<dbReference type="EMBL" id="AE017321">
    <property type="protein sequence ID" value="AAW71156.1"/>
    <property type="molecule type" value="Genomic_DNA"/>
</dbReference>
<dbReference type="RefSeq" id="WP_011256766.1">
    <property type="nucleotide sequence ID" value="NC_006833.1"/>
</dbReference>
<dbReference type="SMR" id="Q5GS68"/>
<dbReference type="STRING" id="292805.Wbm0568"/>
<dbReference type="KEGG" id="wbm:Wbm0568"/>
<dbReference type="eggNOG" id="COG0624">
    <property type="taxonomic scope" value="Bacteria"/>
</dbReference>
<dbReference type="HOGENOM" id="CLU_021802_4_0_5"/>
<dbReference type="UniPathway" id="UPA00034">
    <property type="reaction ID" value="UER00021"/>
</dbReference>
<dbReference type="Proteomes" id="UP000000534">
    <property type="component" value="Chromosome"/>
</dbReference>
<dbReference type="GO" id="GO:0008777">
    <property type="term" value="F:acetylornithine deacetylase activity"/>
    <property type="evidence" value="ECO:0007669"/>
    <property type="project" value="TreeGrafter"/>
</dbReference>
<dbReference type="GO" id="GO:0050897">
    <property type="term" value="F:cobalt ion binding"/>
    <property type="evidence" value="ECO:0007669"/>
    <property type="project" value="UniProtKB-UniRule"/>
</dbReference>
<dbReference type="GO" id="GO:0009014">
    <property type="term" value="F:succinyl-diaminopimelate desuccinylase activity"/>
    <property type="evidence" value="ECO:0007669"/>
    <property type="project" value="UniProtKB-UniRule"/>
</dbReference>
<dbReference type="GO" id="GO:0008270">
    <property type="term" value="F:zinc ion binding"/>
    <property type="evidence" value="ECO:0007669"/>
    <property type="project" value="UniProtKB-UniRule"/>
</dbReference>
<dbReference type="GO" id="GO:0019877">
    <property type="term" value="P:diaminopimelate biosynthetic process"/>
    <property type="evidence" value="ECO:0007669"/>
    <property type="project" value="UniProtKB-UniRule"/>
</dbReference>
<dbReference type="GO" id="GO:0006526">
    <property type="term" value="P:L-arginine biosynthetic process"/>
    <property type="evidence" value="ECO:0007669"/>
    <property type="project" value="TreeGrafter"/>
</dbReference>
<dbReference type="GO" id="GO:0009089">
    <property type="term" value="P:lysine biosynthetic process via diaminopimelate"/>
    <property type="evidence" value="ECO:0007669"/>
    <property type="project" value="UniProtKB-UniRule"/>
</dbReference>
<dbReference type="CDD" id="cd03891">
    <property type="entry name" value="M20_DapE_proteobac"/>
    <property type="match status" value="1"/>
</dbReference>
<dbReference type="Gene3D" id="3.40.630.10">
    <property type="entry name" value="Zn peptidases"/>
    <property type="match status" value="2"/>
</dbReference>
<dbReference type="HAMAP" id="MF_01690">
    <property type="entry name" value="DapE"/>
    <property type="match status" value="1"/>
</dbReference>
<dbReference type="InterPro" id="IPR036264">
    <property type="entry name" value="Bact_exopeptidase_dim_dom"/>
</dbReference>
<dbReference type="InterPro" id="IPR005941">
    <property type="entry name" value="DapE_proteobac"/>
</dbReference>
<dbReference type="InterPro" id="IPR002933">
    <property type="entry name" value="Peptidase_M20"/>
</dbReference>
<dbReference type="InterPro" id="IPR011650">
    <property type="entry name" value="Peptidase_M20_dimer"/>
</dbReference>
<dbReference type="InterPro" id="IPR050072">
    <property type="entry name" value="Peptidase_M20A"/>
</dbReference>
<dbReference type="NCBIfam" id="TIGR01246">
    <property type="entry name" value="dapE_proteo"/>
    <property type="match status" value="1"/>
</dbReference>
<dbReference type="NCBIfam" id="NF009557">
    <property type="entry name" value="PRK13009.1"/>
    <property type="match status" value="1"/>
</dbReference>
<dbReference type="PANTHER" id="PTHR43808">
    <property type="entry name" value="ACETYLORNITHINE DEACETYLASE"/>
    <property type="match status" value="1"/>
</dbReference>
<dbReference type="PANTHER" id="PTHR43808:SF31">
    <property type="entry name" value="N-ACETYL-L-CITRULLINE DEACETYLASE"/>
    <property type="match status" value="1"/>
</dbReference>
<dbReference type="Pfam" id="PF07687">
    <property type="entry name" value="M20_dimer"/>
    <property type="match status" value="1"/>
</dbReference>
<dbReference type="Pfam" id="PF01546">
    <property type="entry name" value="Peptidase_M20"/>
    <property type="match status" value="1"/>
</dbReference>
<dbReference type="SUPFAM" id="SSF55031">
    <property type="entry name" value="Bacterial exopeptidase dimerisation domain"/>
    <property type="match status" value="1"/>
</dbReference>
<dbReference type="SUPFAM" id="SSF53187">
    <property type="entry name" value="Zn-dependent exopeptidases"/>
    <property type="match status" value="1"/>
</dbReference>
<comment type="function">
    <text evidence="1">Catalyzes the hydrolysis of N-succinyl-L,L-diaminopimelic acid (SDAP), forming succinate and LL-2,6-diaminopimelate (DAP), an intermediate involved in the bacterial biosynthesis of lysine and meso-diaminopimelic acid, an essential component of bacterial cell walls.</text>
</comment>
<comment type="catalytic activity">
    <reaction evidence="1">
        <text>N-succinyl-(2S,6S)-2,6-diaminopimelate + H2O = (2S,6S)-2,6-diaminopimelate + succinate</text>
        <dbReference type="Rhea" id="RHEA:22608"/>
        <dbReference type="ChEBI" id="CHEBI:15377"/>
        <dbReference type="ChEBI" id="CHEBI:30031"/>
        <dbReference type="ChEBI" id="CHEBI:57609"/>
        <dbReference type="ChEBI" id="CHEBI:58087"/>
        <dbReference type="EC" id="3.5.1.18"/>
    </reaction>
</comment>
<comment type="cofactor">
    <cofactor evidence="1">
        <name>Zn(2+)</name>
        <dbReference type="ChEBI" id="CHEBI:29105"/>
    </cofactor>
    <cofactor evidence="1">
        <name>Co(2+)</name>
        <dbReference type="ChEBI" id="CHEBI:48828"/>
    </cofactor>
    <text evidence="1">Binds 2 Zn(2+) or Co(2+) ions per subunit.</text>
</comment>
<comment type="pathway">
    <text evidence="1">Amino-acid biosynthesis; L-lysine biosynthesis via DAP pathway; LL-2,6-diaminopimelate from (S)-tetrahydrodipicolinate (succinylase route): step 3/3.</text>
</comment>
<comment type="subunit">
    <text evidence="1">Homodimer.</text>
</comment>
<comment type="similarity">
    <text evidence="1">Belongs to the peptidase M20A family. DapE subfamily.</text>
</comment>
<protein>
    <recommendedName>
        <fullName evidence="1">Succinyl-diaminopimelate desuccinylase</fullName>
        <shortName evidence="1">SDAP desuccinylase</shortName>
        <ecNumber evidence="1">3.5.1.18</ecNumber>
    </recommendedName>
    <alternativeName>
        <fullName evidence="1">N-succinyl-LL-2,6-diaminoheptanedioate amidohydrolase</fullName>
    </alternativeName>
</protein>
<feature type="chain" id="PRO_0000375778" description="Succinyl-diaminopimelate desuccinylase">
    <location>
        <begin position="1"/>
        <end position="401"/>
    </location>
</feature>
<feature type="active site" evidence="1">
    <location>
        <position position="73"/>
    </location>
</feature>
<feature type="active site" description="Proton acceptor" evidence="1">
    <location>
        <position position="138"/>
    </location>
</feature>
<feature type="binding site" evidence="1">
    <location>
        <position position="71"/>
    </location>
    <ligand>
        <name>Zn(2+)</name>
        <dbReference type="ChEBI" id="CHEBI:29105"/>
        <label>1</label>
    </ligand>
</feature>
<feature type="binding site" evidence="1">
    <location>
        <position position="104"/>
    </location>
    <ligand>
        <name>Zn(2+)</name>
        <dbReference type="ChEBI" id="CHEBI:29105"/>
        <label>1</label>
    </ligand>
</feature>
<feature type="binding site" evidence="1">
    <location>
        <position position="104"/>
    </location>
    <ligand>
        <name>Zn(2+)</name>
        <dbReference type="ChEBI" id="CHEBI:29105"/>
        <label>2</label>
    </ligand>
</feature>
<feature type="binding site" evidence="1">
    <location>
        <position position="139"/>
    </location>
    <ligand>
        <name>Zn(2+)</name>
        <dbReference type="ChEBI" id="CHEBI:29105"/>
        <label>2</label>
    </ligand>
</feature>
<feature type="binding site" evidence="1">
    <location>
        <position position="167"/>
    </location>
    <ligand>
        <name>Zn(2+)</name>
        <dbReference type="ChEBI" id="CHEBI:29105"/>
        <label>1</label>
    </ligand>
</feature>
<feature type="binding site" evidence="1">
    <location>
        <position position="352"/>
    </location>
    <ligand>
        <name>Zn(2+)</name>
        <dbReference type="ChEBI" id="CHEBI:29105"/>
        <label>2</label>
    </ligand>
</feature>
<name>DAPE_WOLTR</name>
<gene>
    <name evidence="1" type="primary">dapE</name>
    <name type="ordered locus">Wbm0568</name>
</gene>
<sequence>MKIDPVELTKKLISFKSITPRDDGAIEHIAAILEKSGFDCEILEFGDNKTKVKNLYAKYINGVQNLCFAGHVDVVPPGQLKDWISDPFSPEVRDGLLYGRGATDMKSGIAAFITAMVDLVAEKFRFNGSISALITSAEESTEEYGTKAVLKWMESKHKKIDYCVVAEPTSSEKLGDTIKIGRRGSATFELICHGKQGHVAYPDLADNPIYKMISILNRIKDTTFDGGNKYFQPSNCEITTIDVGNSTDNVILDSITAGFNIRYNNMQTPDGLYKLIDEICFSVTNDYKLSMHSSRGAFLSTPDRNTDVMFDAINKVTNIDAVLATSGGTSDAAFIKDVCPVIEFGMINKTSHQVNECVLVNDIHKLTAIYKEFIKSYFYPTNRILNQINVIGNVPDSPLLA</sequence>
<proteinExistence type="inferred from homology"/>
<accession>Q5GS68</accession>
<keyword id="KW-0028">Amino-acid biosynthesis</keyword>
<keyword id="KW-0170">Cobalt</keyword>
<keyword id="KW-0220">Diaminopimelate biosynthesis</keyword>
<keyword id="KW-0378">Hydrolase</keyword>
<keyword id="KW-0457">Lysine biosynthesis</keyword>
<keyword id="KW-0479">Metal-binding</keyword>
<keyword id="KW-1185">Reference proteome</keyword>
<keyword id="KW-0862">Zinc</keyword>
<evidence type="ECO:0000255" key="1">
    <source>
        <dbReference type="HAMAP-Rule" id="MF_01690"/>
    </source>
</evidence>
<reference key="1">
    <citation type="journal article" date="2005" name="PLoS Biol.">
        <title>The Wolbachia genome of Brugia malayi: endosymbiont evolution within a human pathogenic nematode.</title>
        <authorList>
            <person name="Foster J."/>
            <person name="Ganatra M."/>
            <person name="Kamal I."/>
            <person name="Ware J."/>
            <person name="Makarova K."/>
            <person name="Ivanova N."/>
            <person name="Bhattacharyya A."/>
            <person name="Kapatral V."/>
            <person name="Kumar S."/>
            <person name="Posfai J."/>
            <person name="Vincze T."/>
            <person name="Ingram J."/>
            <person name="Moran L."/>
            <person name="Lapidus A."/>
            <person name="Omelchenko M."/>
            <person name="Kyrpides N."/>
            <person name="Ghedin E."/>
            <person name="Wang S."/>
            <person name="Goltsman E."/>
            <person name="Joukov V."/>
            <person name="Ostrovskaya O."/>
            <person name="Tsukerman K."/>
            <person name="Mazur M."/>
            <person name="Comb D."/>
            <person name="Koonin E."/>
            <person name="Slatko B."/>
        </authorList>
    </citation>
    <scope>NUCLEOTIDE SEQUENCE [LARGE SCALE GENOMIC DNA]</scope>
    <source>
        <strain>TRS</strain>
    </source>
</reference>
<organism>
    <name type="scientific">Wolbachia sp. subsp. Brugia malayi (strain TRS)</name>
    <dbReference type="NCBI Taxonomy" id="292805"/>
    <lineage>
        <taxon>Bacteria</taxon>
        <taxon>Pseudomonadati</taxon>
        <taxon>Pseudomonadota</taxon>
        <taxon>Alphaproteobacteria</taxon>
        <taxon>Rickettsiales</taxon>
        <taxon>Anaplasmataceae</taxon>
        <taxon>Wolbachieae</taxon>
        <taxon>Wolbachia</taxon>
    </lineage>
</organism>